<comment type="catalytic activity">
    <reaction evidence="1">
        <text>sn-glycerol 3-phosphate + an acyl-CoA = a 1-acyl-sn-glycero-3-phosphate + CoA</text>
        <dbReference type="Rhea" id="RHEA:15325"/>
        <dbReference type="ChEBI" id="CHEBI:57287"/>
        <dbReference type="ChEBI" id="CHEBI:57597"/>
        <dbReference type="ChEBI" id="CHEBI:57970"/>
        <dbReference type="ChEBI" id="CHEBI:58342"/>
        <dbReference type="EC" id="2.3.1.15"/>
    </reaction>
</comment>
<comment type="pathway">
    <text evidence="1">Phospholipid metabolism; CDP-diacylglycerol biosynthesis; CDP-diacylglycerol from sn-glycerol 3-phosphate: step 1/3.</text>
</comment>
<comment type="subcellular location">
    <subcellularLocation>
        <location evidence="1">Cell inner membrane</location>
        <topology evidence="1">Peripheral membrane protein</topology>
        <orientation evidence="1">Cytoplasmic side</orientation>
    </subcellularLocation>
</comment>
<comment type="domain">
    <text evidence="1">The HXXXXD motif is essential for acyltransferase activity and may constitute the binding site for the phosphate moiety of the glycerol-3-phosphate.</text>
</comment>
<comment type="similarity">
    <text evidence="1">Belongs to the GPAT/DAPAT family.</text>
</comment>
<keyword id="KW-0012">Acyltransferase</keyword>
<keyword id="KW-0997">Cell inner membrane</keyword>
<keyword id="KW-1003">Cell membrane</keyword>
<keyword id="KW-0444">Lipid biosynthesis</keyword>
<keyword id="KW-0443">Lipid metabolism</keyword>
<keyword id="KW-0472">Membrane</keyword>
<keyword id="KW-0594">Phospholipid biosynthesis</keyword>
<keyword id="KW-1208">Phospholipid metabolism</keyword>
<keyword id="KW-1185">Reference proteome</keyword>
<keyword id="KW-0808">Transferase</keyword>
<name>PLSB_PECAS</name>
<dbReference type="EC" id="2.3.1.15" evidence="1"/>
<dbReference type="EMBL" id="BX950851">
    <property type="protein sequence ID" value="CAG73543.1"/>
    <property type="molecule type" value="Genomic_DNA"/>
</dbReference>
<dbReference type="RefSeq" id="WP_011092246.1">
    <property type="nucleotide sequence ID" value="NC_004547.2"/>
</dbReference>
<dbReference type="SMR" id="Q6D9I7"/>
<dbReference type="STRING" id="218491.ECA0628"/>
<dbReference type="GeneID" id="57207377"/>
<dbReference type="KEGG" id="eca:ECA0628"/>
<dbReference type="PATRIC" id="fig|218491.5.peg.623"/>
<dbReference type="eggNOG" id="COG2937">
    <property type="taxonomic scope" value="Bacteria"/>
</dbReference>
<dbReference type="HOGENOM" id="CLU_015407_0_0_6"/>
<dbReference type="OrthoDB" id="335193at2"/>
<dbReference type="UniPathway" id="UPA00557">
    <property type="reaction ID" value="UER00612"/>
</dbReference>
<dbReference type="Proteomes" id="UP000007966">
    <property type="component" value="Chromosome"/>
</dbReference>
<dbReference type="GO" id="GO:0005886">
    <property type="term" value="C:plasma membrane"/>
    <property type="evidence" value="ECO:0007669"/>
    <property type="project" value="UniProtKB-SubCell"/>
</dbReference>
<dbReference type="GO" id="GO:0004366">
    <property type="term" value="F:glycerol-3-phosphate O-acyltransferase activity"/>
    <property type="evidence" value="ECO:0007669"/>
    <property type="project" value="UniProtKB-UniRule"/>
</dbReference>
<dbReference type="GO" id="GO:0016024">
    <property type="term" value="P:CDP-diacylglycerol biosynthetic process"/>
    <property type="evidence" value="ECO:0007669"/>
    <property type="project" value="UniProtKB-UniRule"/>
</dbReference>
<dbReference type="GO" id="GO:0006631">
    <property type="term" value="P:fatty acid metabolic process"/>
    <property type="evidence" value="ECO:0007669"/>
    <property type="project" value="TreeGrafter"/>
</dbReference>
<dbReference type="CDD" id="cd07993">
    <property type="entry name" value="LPLAT_DHAPAT-like"/>
    <property type="match status" value="1"/>
</dbReference>
<dbReference type="HAMAP" id="MF_00393">
    <property type="entry name" value="Glyc3P_acyltrans"/>
    <property type="match status" value="1"/>
</dbReference>
<dbReference type="InterPro" id="IPR022284">
    <property type="entry name" value="GPAT/DHAPAT"/>
</dbReference>
<dbReference type="InterPro" id="IPR045520">
    <property type="entry name" value="GPAT/DHAPAT_C"/>
</dbReference>
<dbReference type="InterPro" id="IPR041728">
    <property type="entry name" value="GPAT/DHAPAT_LPLAT"/>
</dbReference>
<dbReference type="InterPro" id="IPR028354">
    <property type="entry name" value="GPAT_PlsB"/>
</dbReference>
<dbReference type="InterPro" id="IPR002123">
    <property type="entry name" value="Plipid/glycerol_acylTrfase"/>
</dbReference>
<dbReference type="NCBIfam" id="TIGR03703">
    <property type="entry name" value="plsB"/>
    <property type="match status" value="1"/>
</dbReference>
<dbReference type="NCBIfam" id="NF003441">
    <property type="entry name" value="PRK04974.1"/>
    <property type="match status" value="1"/>
</dbReference>
<dbReference type="PANTHER" id="PTHR12563:SF17">
    <property type="entry name" value="DIHYDROXYACETONE PHOSPHATE ACYLTRANSFERASE"/>
    <property type="match status" value="1"/>
</dbReference>
<dbReference type="PANTHER" id="PTHR12563">
    <property type="entry name" value="GLYCEROL-3-PHOSPHATE ACYLTRANSFERASE"/>
    <property type="match status" value="1"/>
</dbReference>
<dbReference type="Pfam" id="PF01553">
    <property type="entry name" value="Acyltransferase"/>
    <property type="match status" value="1"/>
</dbReference>
<dbReference type="Pfam" id="PF19277">
    <property type="entry name" value="GPAT_C"/>
    <property type="match status" value="1"/>
</dbReference>
<dbReference type="PIRSF" id="PIRSF500064">
    <property type="entry name" value="GPAT"/>
    <property type="match status" value="1"/>
</dbReference>
<dbReference type="PIRSF" id="PIRSF000437">
    <property type="entry name" value="GPAT_DHAPAT"/>
    <property type="match status" value="1"/>
</dbReference>
<dbReference type="SMART" id="SM00563">
    <property type="entry name" value="PlsC"/>
    <property type="match status" value="1"/>
</dbReference>
<dbReference type="SUPFAM" id="SSF69593">
    <property type="entry name" value="Glycerol-3-phosphate (1)-acyltransferase"/>
    <property type="match status" value="1"/>
</dbReference>
<protein>
    <recommendedName>
        <fullName evidence="1">Glycerol-3-phosphate acyltransferase</fullName>
        <shortName evidence="1">GPAT</shortName>
        <ecNumber evidence="1">2.3.1.15</ecNumber>
    </recommendedName>
</protein>
<organism>
    <name type="scientific">Pectobacterium atrosepticum (strain SCRI 1043 / ATCC BAA-672)</name>
    <name type="common">Erwinia carotovora subsp. atroseptica</name>
    <dbReference type="NCBI Taxonomy" id="218491"/>
    <lineage>
        <taxon>Bacteria</taxon>
        <taxon>Pseudomonadati</taxon>
        <taxon>Pseudomonadota</taxon>
        <taxon>Gammaproteobacteria</taxon>
        <taxon>Enterobacterales</taxon>
        <taxon>Pectobacteriaceae</taxon>
        <taxon>Pectobacterium</taxon>
    </lineage>
</organism>
<gene>
    <name evidence="1" type="primary">plsB</name>
    <name type="ordered locus">ECA0628</name>
</gene>
<reference key="1">
    <citation type="journal article" date="2004" name="Proc. Natl. Acad. Sci. U.S.A.">
        <title>Genome sequence of the enterobacterial phytopathogen Erwinia carotovora subsp. atroseptica and characterization of virulence factors.</title>
        <authorList>
            <person name="Bell K.S."/>
            <person name="Sebaihia M."/>
            <person name="Pritchard L."/>
            <person name="Holden M.T.G."/>
            <person name="Hyman L.J."/>
            <person name="Holeva M.C."/>
            <person name="Thomson N.R."/>
            <person name="Bentley S.D."/>
            <person name="Churcher L.J.C."/>
            <person name="Mungall K."/>
            <person name="Atkin R."/>
            <person name="Bason N."/>
            <person name="Brooks K."/>
            <person name="Chillingworth T."/>
            <person name="Clark K."/>
            <person name="Doggett J."/>
            <person name="Fraser A."/>
            <person name="Hance Z."/>
            <person name="Hauser H."/>
            <person name="Jagels K."/>
            <person name="Moule S."/>
            <person name="Norbertczak H."/>
            <person name="Ormond D."/>
            <person name="Price C."/>
            <person name="Quail M.A."/>
            <person name="Sanders M."/>
            <person name="Walker D."/>
            <person name="Whitehead S."/>
            <person name="Salmond G.P.C."/>
            <person name="Birch P.R.J."/>
            <person name="Parkhill J."/>
            <person name="Toth I.K."/>
        </authorList>
    </citation>
    <scope>NUCLEOTIDE SEQUENCE [LARGE SCALE GENOMIC DNA]</scope>
    <source>
        <strain>SCRI 1043 / ATCC BAA-672</strain>
    </source>
</reference>
<accession>Q6D9I7</accession>
<evidence type="ECO:0000255" key="1">
    <source>
        <dbReference type="HAMAP-Rule" id="MF_00393"/>
    </source>
</evidence>
<evidence type="ECO:0000256" key="2">
    <source>
        <dbReference type="SAM" id="MobiDB-lite"/>
    </source>
</evidence>
<feature type="chain" id="PRO_1000049432" description="Glycerol-3-phosphate acyltransferase">
    <location>
        <begin position="1"/>
        <end position="825"/>
    </location>
</feature>
<feature type="region of interest" description="Disordered" evidence="2">
    <location>
        <begin position="802"/>
        <end position="825"/>
    </location>
</feature>
<feature type="short sequence motif" description="HXXXXD motif">
    <location>
        <begin position="306"/>
        <end position="311"/>
    </location>
</feature>
<sequence>MSGWRKIYYKLLNLPLKLLVKSKVIPADPVVELGLDPSRPILYVLPYNSQADLLTLRAKCLALGLPDPSQSFEFNGVELPSHVFINDGPRVFRYYVPKQKSVKLFHDYLDLHRANPDLDVQMVPVSVMFGRSPGREGHTQAAPHLRLLNGIEKFFAVLWLGRDSFVRFSSPVSLRYMATEHGTDKTIAHKLARVARMHFSRQRLAAVGPRLPVRQELFNKLLDSKAIKKAVDDEARSKKISHEKAQQNAIALMEEIAADFSYEAVRLSDRVLSWTWNRLYQGINVHNAERVRQLAQDGHGIVYVPCHRSHMDYLLLSYVLYHQGLVPPHIAAGINLNFWPAGPIFRRLGAFFIRRTFKGNKLYSTIFREYLGELFARGYSVEYFMEGGRSRTGRLLDPKTGTLAMTIQAMLRGGTRPITLVPIYVGYEHVMEVGTYAKELRGAVKEKEGFMQMVRGLRKLRNLGQGYVNFGEPLPLTTYLNQHVPQWRDAIDPIEAQRPSWLTPTVQDISMDIMVRINNSAAANAMNLCSTALLASRQRSLTREQMHEQLDCYLQLLRQVPYHKDITAPKKTADELLEHALGMNKFEVEKDSIGDIIILPREQAVLMTYYRNNIQHLLILPSLIASIVIHHRRITLAEVVRQITLIYPLLQAELFLHYSNEQLPRVLETLANELTRQELLCSRDGQLAINPPRIRTLQLLSAGVRETLQRYAITLSLLCANPEINRGTLEKESRNMAQRLSVLHGINAPEFFDKAVFSTLVATLRTEGYITDSAEAAQGDIVTIYNILGDLITPEVRLTIESASSSTEMEASTSSSQTAEETTQG</sequence>
<proteinExistence type="inferred from homology"/>